<proteinExistence type="inferred from homology"/>
<name>DBP7_MYCMD</name>
<protein>
    <recommendedName>
        <fullName>ATP-dependent RNA helicase DBP7</fullName>
        <ecNumber>3.6.4.13</ecNumber>
    </recommendedName>
</protein>
<organism>
    <name type="scientific">Mycosarcoma maydis</name>
    <name type="common">Corn smut fungus</name>
    <name type="synonym">Ustilago maydis</name>
    <dbReference type="NCBI Taxonomy" id="5270"/>
    <lineage>
        <taxon>Eukaryota</taxon>
        <taxon>Fungi</taxon>
        <taxon>Dikarya</taxon>
        <taxon>Basidiomycota</taxon>
        <taxon>Ustilaginomycotina</taxon>
        <taxon>Ustilaginomycetes</taxon>
        <taxon>Ustilaginales</taxon>
        <taxon>Ustilaginaceae</taxon>
        <taxon>Mycosarcoma</taxon>
    </lineage>
</organism>
<gene>
    <name type="primary">DBP7</name>
    <name type="ORF">UMAG_06228</name>
</gene>
<sequence length="974" mass="104373">MDDNDDGLMLNFAAPAAGSASVSSKRSKQTAKARFAQKRTAHQLRKQAPKQNRSVAPIESVQGVVTPASARLSPAPASANESPAAKRQRIEATSTSSAALSAPRFDPRSETAKSAPITSRSSQTTSSAASSSRKAIAPVTKLAGSSFASAGASSSASKQTNGGIVSTLFPAHGVLEDSSIALTPFQRKAYHPTNAPSVGSDFASCGLDPLLVYHLASKMNIGSNPTAIQKAALPHLLHPGLDRDILIQAQTGSGKTLTYLLPIVQSLLPLCEESFIDRSVGTLAIVLAPTRELARQIYEVLEKLVSLALSLKEQNQEVEGTVRRTRWLVPGLLSGGSTKNHEKQRLRKGCPILVSTPGRLLDHLQNTSSFDVGKCRWLVLDEADRLLEMGFEEQLTGIVRALDGRRNLACTAARQAMPAYQEGTAPGDADWIPDADVMDTLGMAWWAHARRVVLCSATLDEHVQVLAGKTLVNPKIIRGVKSDAAETSTQVTTDADSTLQKRAVKFAAPAQLAQSFVTTPPKLRLVTLLSLLRSYISRARRQWQHVDHQAGAGRVIVFMSCTDSVDFHYAAFGGARMNASENDASADVQVQDAQLATHVTSELIPDVPIYRLHGSMTQQERISSLKGFSGIRTKHSAERQGFQGSILLCTSVASRGLDLPEVGCVIQLDPPTEGGIEEYLHRVGRTARVGRAGESWLLVLPQELGWVEHVLESHMTIQSSDSASCSCSEIESKKQGSTRKITPASIELVLQQGMGGTMGTLEYQSRATEVQLAFERWVISGERPSLLARKAFLSHVRAYATHSAEEKQYFNVRALHLGHLAKAFALREAPRSLGAKSSAIGASSTPASSHETTNKKRMRIAPDTAESDSSSDSSDDAGSDYESHSNKKGDAFELDKAALAKLTESIVANADGSNRSKKLAREAQKAAAAAGVADDKAKQTDAEARMYAKVRALGKMSKKHGVLGAHAADEFQIA</sequence>
<evidence type="ECO:0000250" key="1"/>
<evidence type="ECO:0000255" key="2">
    <source>
        <dbReference type="PROSITE-ProRule" id="PRU00541"/>
    </source>
</evidence>
<evidence type="ECO:0000255" key="3">
    <source>
        <dbReference type="PROSITE-ProRule" id="PRU00542"/>
    </source>
</evidence>
<evidence type="ECO:0000256" key="4">
    <source>
        <dbReference type="SAM" id="MobiDB-lite"/>
    </source>
</evidence>
<evidence type="ECO:0000305" key="5"/>
<dbReference type="EC" id="3.6.4.13"/>
<dbReference type="EMBL" id="CM003161">
    <property type="protein sequence ID" value="KIS65851.1"/>
    <property type="molecule type" value="Genomic_DNA"/>
</dbReference>
<dbReference type="RefSeq" id="XP_011392582.1">
    <property type="nucleotide sequence ID" value="XM_011394280.1"/>
</dbReference>
<dbReference type="FunCoup" id="Q4P0Y5">
    <property type="interactions" value="517"/>
</dbReference>
<dbReference type="STRING" id="237631.Q4P0Y5"/>
<dbReference type="EnsemblFungi" id="KIS65851">
    <property type="protein sequence ID" value="KIS65851"/>
    <property type="gene ID" value="UMAG_06228"/>
</dbReference>
<dbReference type="GeneID" id="23565888"/>
<dbReference type="KEGG" id="uma:UMAG_06228"/>
<dbReference type="VEuPathDB" id="FungiDB:UMAG_06228"/>
<dbReference type="eggNOG" id="KOG0348">
    <property type="taxonomic scope" value="Eukaryota"/>
</dbReference>
<dbReference type="HOGENOM" id="CLU_003041_26_2_1"/>
<dbReference type="InParanoid" id="Q4P0Y5"/>
<dbReference type="OMA" id="QMGFERW"/>
<dbReference type="OrthoDB" id="422663at2759"/>
<dbReference type="Proteomes" id="UP000000561">
    <property type="component" value="Chromosome 22"/>
</dbReference>
<dbReference type="GO" id="GO:0005730">
    <property type="term" value="C:nucleolus"/>
    <property type="evidence" value="ECO:0007669"/>
    <property type="project" value="UniProtKB-SubCell"/>
</dbReference>
<dbReference type="GO" id="GO:0005634">
    <property type="term" value="C:nucleus"/>
    <property type="evidence" value="ECO:0000318"/>
    <property type="project" value="GO_Central"/>
</dbReference>
<dbReference type="GO" id="GO:0005524">
    <property type="term" value="F:ATP binding"/>
    <property type="evidence" value="ECO:0007669"/>
    <property type="project" value="UniProtKB-KW"/>
</dbReference>
<dbReference type="GO" id="GO:0016887">
    <property type="term" value="F:ATP hydrolysis activity"/>
    <property type="evidence" value="ECO:0007669"/>
    <property type="project" value="RHEA"/>
</dbReference>
<dbReference type="GO" id="GO:0003723">
    <property type="term" value="F:RNA binding"/>
    <property type="evidence" value="ECO:0007669"/>
    <property type="project" value="UniProtKB-KW"/>
</dbReference>
<dbReference type="GO" id="GO:0003724">
    <property type="term" value="F:RNA helicase activity"/>
    <property type="evidence" value="ECO:0007669"/>
    <property type="project" value="UniProtKB-EC"/>
</dbReference>
<dbReference type="GO" id="GO:0042254">
    <property type="term" value="P:ribosome biogenesis"/>
    <property type="evidence" value="ECO:0000318"/>
    <property type="project" value="GO_Central"/>
</dbReference>
<dbReference type="GO" id="GO:0006364">
    <property type="term" value="P:rRNA processing"/>
    <property type="evidence" value="ECO:0007669"/>
    <property type="project" value="UniProtKB-KW"/>
</dbReference>
<dbReference type="CDD" id="cd17949">
    <property type="entry name" value="DEADc_DDX31"/>
    <property type="match status" value="1"/>
</dbReference>
<dbReference type="CDD" id="cd18787">
    <property type="entry name" value="SF2_C_DEAD"/>
    <property type="match status" value="1"/>
</dbReference>
<dbReference type="Gene3D" id="3.40.50.300">
    <property type="entry name" value="P-loop containing nucleotide triphosphate hydrolases"/>
    <property type="match status" value="2"/>
</dbReference>
<dbReference type="InterPro" id="IPR011545">
    <property type="entry name" value="DEAD/DEAH_box_helicase_dom"/>
</dbReference>
<dbReference type="InterPro" id="IPR014001">
    <property type="entry name" value="Helicase_ATP-bd"/>
</dbReference>
<dbReference type="InterPro" id="IPR001650">
    <property type="entry name" value="Helicase_C-like"/>
</dbReference>
<dbReference type="InterPro" id="IPR027417">
    <property type="entry name" value="P-loop_NTPase"/>
</dbReference>
<dbReference type="InterPro" id="IPR000629">
    <property type="entry name" value="RNA-helicase_DEAD-box_CS"/>
</dbReference>
<dbReference type="InterPro" id="IPR025313">
    <property type="entry name" value="SPB4-like_CTE"/>
</dbReference>
<dbReference type="PANTHER" id="PTHR24031">
    <property type="entry name" value="RNA HELICASE"/>
    <property type="match status" value="1"/>
</dbReference>
<dbReference type="Pfam" id="PF13959">
    <property type="entry name" value="CTE_SPB4"/>
    <property type="match status" value="1"/>
</dbReference>
<dbReference type="Pfam" id="PF00270">
    <property type="entry name" value="DEAD"/>
    <property type="match status" value="1"/>
</dbReference>
<dbReference type="Pfam" id="PF00271">
    <property type="entry name" value="Helicase_C"/>
    <property type="match status" value="1"/>
</dbReference>
<dbReference type="SMART" id="SM00487">
    <property type="entry name" value="DEXDc"/>
    <property type="match status" value="1"/>
</dbReference>
<dbReference type="SMART" id="SM01178">
    <property type="entry name" value="DUF4217"/>
    <property type="match status" value="1"/>
</dbReference>
<dbReference type="SMART" id="SM00490">
    <property type="entry name" value="HELICc"/>
    <property type="match status" value="1"/>
</dbReference>
<dbReference type="SUPFAM" id="SSF52540">
    <property type="entry name" value="P-loop containing nucleoside triphosphate hydrolases"/>
    <property type="match status" value="2"/>
</dbReference>
<dbReference type="PROSITE" id="PS00039">
    <property type="entry name" value="DEAD_ATP_HELICASE"/>
    <property type="match status" value="1"/>
</dbReference>
<dbReference type="PROSITE" id="PS51192">
    <property type="entry name" value="HELICASE_ATP_BIND_1"/>
    <property type="match status" value="1"/>
</dbReference>
<dbReference type="PROSITE" id="PS51194">
    <property type="entry name" value="HELICASE_CTER"/>
    <property type="match status" value="1"/>
</dbReference>
<dbReference type="PROSITE" id="PS51195">
    <property type="entry name" value="Q_MOTIF"/>
    <property type="match status" value="1"/>
</dbReference>
<accession>Q4P0Y5</accession>
<accession>A0A0D1DP70</accession>
<feature type="chain" id="PRO_0000256028" description="ATP-dependent RNA helicase DBP7">
    <location>
        <begin position="1"/>
        <end position="974"/>
    </location>
</feature>
<feature type="domain" description="Helicase ATP-binding" evidence="2">
    <location>
        <begin position="236"/>
        <end position="477"/>
    </location>
</feature>
<feature type="domain" description="Helicase C-terminal" evidence="3">
    <location>
        <begin position="531"/>
        <end position="747"/>
    </location>
</feature>
<feature type="region of interest" description="Disordered" evidence="4">
    <location>
        <begin position="1"/>
        <end position="135"/>
    </location>
</feature>
<feature type="region of interest" description="Disordered" evidence="4">
    <location>
        <begin position="836"/>
        <end position="887"/>
    </location>
</feature>
<feature type="short sequence motif" description="Q motif">
    <location>
        <begin position="200"/>
        <end position="230"/>
    </location>
</feature>
<feature type="short sequence motif" description="DEAD box">
    <location>
        <begin position="381"/>
        <end position="384"/>
    </location>
</feature>
<feature type="compositionally biased region" description="Low complexity" evidence="4">
    <location>
        <begin position="13"/>
        <end position="24"/>
    </location>
</feature>
<feature type="compositionally biased region" description="Basic residues" evidence="4">
    <location>
        <begin position="25"/>
        <end position="48"/>
    </location>
</feature>
<feature type="compositionally biased region" description="Low complexity" evidence="4">
    <location>
        <begin position="67"/>
        <end position="85"/>
    </location>
</feature>
<feature type="compositionally biased region" description="Low complexity" evidence="4">
    <location>
        <begin position="92"/>
        <end position="102"/>
    </location>
</feature>
<feature type="compositionally biased region" description="Low complexity" evidence="4">
    <location>
        <begin position="118"/>
        <end position="133"/>
    </location>
</feature>
<feature type="compositionally biased region" description="Polar residues" evidence="4">
    <location>
        <begin position="840"/>
        <end position="851"/>
    </location>
</feature>
<feature type="binding site" evidence="2">
    <location>
        <begin position="249"/>
        <end position="256"/>
    </location>
    <ligand>
        <name>ATP</name>
        <dbReference type="ChEBI" id="CHEBI:30616"/>
    </ligand>
</feature>
<reference key="1">
    <citation type="journal article" date="2006" name="Nature">
        <title>Insights from the genome of the biotrophic fungal plant pathogen Ustilago maydis.</title>
        <authorList>
            <person name="Kaemper J."/>
            <person name="Kahmann R."/>
            <person name="Boelker M."/>
            <person name="Ma L.-J."/>
            <person name="Brefort T."/>
            <person name="Saville B.J."/>
            <person name="Banuett F."/>
            <person name="Kronstad J.W."/>
            <person name="Gold S.E."/>
            <person name="Mueller O."/>
            <person name="Perlin M.H."/>
            <person name="Woesten H.A.B."/>
            <person name="de Vries R."/>
            <person name="Ruiz-Herrera J."/>
            <person name="Reynaga-Pena C.G."/>
            <person name="Snetselaar K."/>
            <person name="McCann M."/>
            <person name="Perez-Martin J."/>
            <person name="Feldbruegge M."/>
            <person name="Basse C.W."/>
            <person name="Steinberg G."/>
            <person name="Ibeas J.I."/>
            <person name="Holloman W."/>
            <person name="Guzman P."/>
            <person name="Farman M.L."/>
            <person name="Stajich J.E."/>
            <person name="Sentandreu R."/>
            <person name="Gonzalez-Prieto J.M."/>
            <person name="Kennell J.C."/>
            <person name="Molina L."/>
            <person name="Schirawski J."/>
            <person name="Mendoza-Mendoza A."/>
            <person name="Greilinger D."/>
            <person name="Muench K."/>
            <person name="Roessel N."/>
            <person name="Scherer M."/>
            <person name="Vranes M."/>
            <person name="Ladendorf O."/>
            <person name="Vincon V."/>
            <person name="Fuchs U."/>
            <person name="Sandrock B."/>
            <person name="Meng S."/>
            <person name="Ho E.C.H."/>
            <person name="Cahill M.J."/>
            <person name="Boyce K.J."/>
            <person name="Klose J."/>
            <person name="Klosterman S.J."/>
            <person name="Deelstra H.J."/>
            <person name="Ortiz-Castellanos L."/>
            <person name="Li W."/>
            <person name="Sanchez-Alonso P."/>
            <person name="Schreier P.H."/>
            <person name="Haeuser-Hahn I."/>
            <person name="Vaupel M."/>
            <person name="Koopmann E."/>
            <person name="Friedrich G."/>
            <person name="Voss H."/>
            <person name="Schlueter T."/>
            <person name="Margolis J."/>
            <person name="Platt D."/>
            <person name="Swimmer C."/>
            <person name="Gnirke A."/>
            <person name="Chen F."/>
            <person name="Vysotskaia V."/>
            <person name="Mannhaupt G."/>
            <person name="Gueldener U."/>
            <person name="Muensterkoetter M."/>
            <person name="Haase D."/>
            <person name="Oesterheld M."/>
            <person name="Mewes H.-W."/>
            <person name="Mauceli E.W."/>
            <person name="DeCaprio D."/>
            <person name="Wade C.M."/>
            <person name="Butler J."/>
            <person name="Young S.K."/>
            <person name="Jaffe D.B."/>
            <person name="Calvo S.E."/>
            <person name="Nusbaum C."/>
            <person name="Galagan J.E."/>
            <person name="Birren B.W."/>
        </authorList>
    </citation>
    <scope>NUCLEOTIDE SEQUENCE [LARGE SCALE GENOMIC DNA]</scope>
    <source>
        <strain>DSM 14603 / FGSC 9021 / UM521</strain>
    </source>
</reference>
<reference key="2">
    <citation type="submission" date="2014-09" db="EMBL/GenBank/DDBJ databases">
        <authorList>
            <person name="Gueldener U."/>
            <person name="Muensterkoetter M."/>
            <person name="Walter M.C."/>
            <person name="Mannhaupt G."/>
            <person name="Kahmann R."/>
        </authorList>
    </citation>
    <scope>GENOME REANNOTATION</scope>
    <source>
        <strain>DSM 14603 / FGSC 9021 / UM521</strain>
    </source>
</reference>
<comment type="function">
    <text evidence="1">ATP-binding RNA helicase involved in the biogenesis of 60S ribosomal subunits and is required for the normal formation of 25S and 5.8S rRNAs.</text>
</comment>
<comment type="catalytic activity">
    <reaction>
        <text>ATP + H2O = ADP + phosphate + H(+)</text>
        <dbReference type="Rhea" id="RHEA:13065"/>
        <dbReference type="ChEBI" id="CHEBI:15377"/>
        <dbReference type="ChEBI" id="CHEBI:15378"/>
        <dbReference type="ChEBI" id="CHEBI:30616"/>
        <dbReference type="ChEBI" id="CHEBI:43474"/>
        <dbReference type="ChEBI" id="CHEBI:456216"/>
        <dbReference type="EC" id="3.6.4.13"/>
    </reaction>
</comment>
<comment type="subcellular location">
    <subcellularLocation>
        <location evidence="1">Nucleus</location>
        <location evidence="1">Nucleolus</location>
    </subcellularLocation>
</comment>
<comment type="domain">
    <text>The Q motif is unique to and characteristic of the DEAD box family of RNA helicases and controls ATP binding and hydrolysis.</text>
</comment>
<comment type="similarity">
    <text evidence="5">Belongs to the DEAD box helicase family. DDX31/DBP7 subfamily.</text>
</comment>
<keyword id="KW-0067">ATP-binding</keyword>
<keyword id="KW-0347">Helicase</keyword>
<keyword id="KW-0378">Hydrolase</keyword>
<keyword id="KW-0547">Nucleotide-binding</keyword>
<keyword id="KW-0539">Nucleus</keyword>
<keyword id="KW-1185">Reference proteome</keyword>
<keyword id="KW-0690">Ribosome biogenesis</keyword>
<keyword id="KW-0694">RNA-binding</keyword>
<keyword id="KW-0698">rRNA processing</keyword>